<protein>
    <recommendedName>
        <fullName evidence="2">Uncharacterized protein C13orf46</fullName>
    </recommendedName>
</protein>
<dbReference type="EMBL" id="AUXG01000135">
    <property type="status" value="NOT_ANNOTATED_CDS"/>
    <property type="molecule type" value="Genomic_DNA"/>
</dbReference>
<dbReference type="EMBL" id="BX537329">
    <property type="status" value="NOT_ANNOTATED_CDS"/>
    <property type="molecule type" value="Genomic_DNA"/>
</dbReference>
<dbReference type="EMBL" id="FP565324">
    <property type="status" value="NOT_ANNOTATED_CDS"/>
    <property type="molecule type" value="Genomic_DNA"/>
</dbReference>
<dbReference type="CCDS" id="CCDS91842.1"/>
<dbReference type="RefSeq" id="NP_001352384.1">
    <property type="nucleotide sequence ID" value="NM_001365455.2"/>
</dbReference>
<dbReference type="RefSeq" id="XP_047285941.1">
    <property type="nucleotide sequence ID" value="XM_047429985.1"/>
</dbReference>
<dbReference type="RefSeq" id="XP_054187686.1">
    <property type="nucleotide sequence ID" value="XM_054331711.1"/>
</dbReference>
<dbReference type="BioMuta" id="ENSG00000283199"/>
<dbReference type="MassIVE" id="A0A1B0GUA9"/>
<dbReference type="PeptideAtlas" id="A0A1B0GUA9"/>
<dbReference type="Ensembl" id="ENST00000636000.3">
    <property type="protein sequence ID" value="ENSP00000490261.2"/>
    <property type="gene ID" value="ENSG00000283302.3"/>
</dbReference>
<dbReference type="Ensembl" id="ENST00000636427.3">
    <property type="protein sequence ID" value="ENSP00000490032.2"/>
    <property type="gene ID" value="ENSG00000283199.3"/>
</dbReference>
<dbReference type="GeneID" id="100507747"/>
<dbReference type="MANE-Select" id="ENST00000636427.3">
    <property type="protein sequence ID" value="ENSP00000490032.2"/>
    <property type="RefSeq nucleotide sequence ID" value="NM_001365455.2"/>
    <property type="RefSeq protein sequence ID" value="NP_001352384.1"/>
</dbReference>
<dbReference type="AGR" id="HGNC:53786"/>
<dbReference type="GeneCards" id="C13orf46"/>
<dbReference type="HGNC" id="HGNC:53786">
    <property type="gene designation" value="C13orf46"/>
</dbReference>
<dbReference type="HPA" id="ENSG00000283199">
    <property type="expression patterns" value="Tissue enhanced (pancreas, stomach, testis)"/>
</dbReference>
<dbReference type="neXtProt" id="NX_A0A1B0GUA9"/>
<dbReference type="OpenTargets" id="ENSG00000283199"/>
<dbReference type="VEuPathDB" id="HostDB:ENSG00000283199"/>
<dbReference type="GeneTree" id="ENSGT00390000016480"/>
<dbReference type="InParanoid" id="A0A1B0GUA9"/>
<dbReference type="OMA" id="DEMQTSW"/>
<dbReference type="OrthoDB" id="9451238at2759"/>
<dbReference type="PAN-GO" id="A0A1B0GUA9">
    <property type="GO annotations" value="0 GO annotations based on evolutionary models"/>
</dbReference>
<dbReference type="Pharos" id="A0A1B0GUA9">
    <property type="development level" value="Tdark"/>
</dbReference>
<dbReference type="PRO" id="PR:A0A1B0GUA9"/>
<dbReference type="Proteomes" id="UP000005640">
    <property type="component" value="Chromosome 13"/>
</dbReference>
<dbReference type="RNAct" id="A0A1B0GUA9">
    <property type="molecule type" value="protein"/>
</dbReference>
<dbReference type="Bgee" id="ENSG00000283199">
    <property type="expression patterns" value="Expressed in sural nerve and 93 other cell types or tissues"/>
</dbReference>
<dbReference type="InterPro" id="IPR040020">
    <property type="entry name" value="C13orf46-like"/>
</dbReference>
<dbReference type="PANTHER" id="PTHR39223">
    <property type="entry name" value="RIKEN CDNA 1700029H14 GENE"/>
    <property type="match status" value="1"/>
</dbReference>
<dbReference type="PANTHER" id="PTHR39223:SF1">
    <property type="entry name" value="RIKEN CDNA 1700029H14 GENE"/>
    <property type="match status" value="1"/>
</dbReference>
<evidence type="ECO:0000256" key="1">
    <source>
        <dbReference type="SAM" id="MobiDB-lite"/>
    </source>
</evidence>
<evidence type="ECO:0000305" key="2"/>
<evidence type="ECO:0000312" key="3">
    <source>
        <dbReference type="HGNC" id="HGNC:53786"/>
    </source>
</evidence>
<keyword id="KW-1267">Proteomics identification</keyword>
<keyword id="KW-1185">Reference proteome</keyword>
<proteinExistence type="evidence at protein level"/>
<reference key="1">
    <citation type="journal article" date="2004" name="Nature">
        <title>The DNA sequence and analysis of human chromosome 13.</title>
        <authorList>
            <person name="Dunham A."/>
            <person name="Matthews L.H."/>
            <person name="Burton J."/>
            <person name="Ashurst J.L."/>
            <person name="Howe K.L."/>
            <person name="Ashcroft K.J."/>
            <person name="Beare D.M."/>
            <person name="Burford D.C."/>
            <person name="Hunt S.E."/>
            <person name="Griffiths-Jones S."/>
            <person name="Jones M.C."/>
            <person name="Keenan S.J."/>
            <person name="Oliver K."/>
            <person name="Scott C.E."/>
            <person name="Ainscough R."/>
            <person name="Almeida J.P."/>
            <person name="Ambrose K.D."/>
            <person name="Andrews D.T."/>
            <person name="Ashwell R.I.S."/>
            <person name="Babbage A.K."/>
            <person name="Bagguley C.L."/>
            <person name="Bailey J."/>
            <person name="Bannerjee R."/>
            <person name="Barlow K.F."/>
            <person name="Bates K."/>
            <person name="Beasley H."/>
            <person name="Bird C.P."/>
            <person name="Bray-Allen S."/>
            <person name="Brown A.J."/>
            <person name="Brown J.Y."/>
            <person name="Burrill W."/>
            <person name="Carder C."/>
            <person name="Carter N.P."/>
            <person name="Chapman J.C."/>
            <person name="Clamp M.E."/>
            <person name="Clark S.Y."/>
            <person name="Clarke G."/>
            <person name="Clee C.M."/>
            <person name="Clegg S.C."/>
            <person name="Cobley V."/>
            <person name="Collins J.E."/>
            <person name="Corby N."/>
            <person name="Coville G.J."/>
            <person name="Deloukas P."/>
            <person name="Dhami P."/>
            <person name="Dunham I."/>
            <person name="Dunn M."/>
            <person name="Earthrowl M.E."/>
            <person name="Ellington A.G."/>
            <person name="Faulkner L."/>
            <person name="Frankish A.G."/>
            <person name="Frankland J."/>
            <person name="French L."/>
            <person name="Garner P."/>
            <person name="Garnett J."/>
            <person name="Gilbert J.G.R."/>
            <person name="Gilson C.J."/>
            <person name="Ghori J."/>
            <person name="Grafham D.V."/>
            <person name="Gribble S.M."/>
            <person name="Griffiths C."/>
            <person name="Hall R.E."/>
            <person name="Hammond S."/>
            <person name="Harley J.L."/>
            <person name="Hart E.A."/>
            <person name="Heath P.D."/>
            <person name="Howden P.J."/>
            <person name="Huckle E.J."/>
            <person name="Hunt P.J."/>
            <person name="Hunt A.R."/>
            <person name="Johnson C."/>
            <person name="Johnson D."/>
            <person name="Kay M."/>
            <person name="Kimberley A.M."/>
            <person name="King A."/>
            <person name="Laird G.K."/>
            <person name="Langford C.J."/>
            <person name="Lawlor S."/>
            <person name="Leongamornlert D.A."/>
            <person name="Lloyd D.M."/>
            <person name="Lloyd C."/>
            <person name="Loveland J.E."/>
            <person name="Lovell J."/>
            <person name="Martin S."/>
            <person name="Mashreghi-Mohammadi M."/>
            <person name="McLaren S.J."/>
            <person name="McMurray A."/>
            <person name="Milne S."/>
            <person name="Moore M.J.F."/>
            <person name="Nickerson T."/>
            <person name="Palmer S.A."/>
            <person name="Pearce A.V."/>
            <person name="Peck A.I."/>
            <person name="Pelan S."/>
            <person name="Phillimore B."/>
            <person name="Porter K.M."/>
            <person name="Rice C.M."/>
            <person name="Searle S."/>
            <person name="Sehra H.K."/>
            <person name="Shownkeen R."/>
            <person name="Skuce C.D."/>
            <person name="Smith M."/>
            <person name="Steward C.A."/>
            <person name="Sycamore N."/>
            <person name="Tester J."/>
            <person name="Thomas D.W."/>
            <person name="Tracey A."/>
            <person name="Tromans A."/>
            <person name="Tubby B."/>
            <person name="Wall M."/>
            <person name="Wallis J.M."/>
            <person name="West A.P."/>
            <person name="Whitehead S.L."/>
            <person name="Willey D.L."/>
            <person name="Wilming L."/>
            <person name="Wray P.W."/>
            <person name="Wright M.W."/>
            <person name="Young L."/>
            <person name="Coulson A."/>
            <person name="Durbin R.M."/>
            <person name="Hubbard T."/>
            <person name="Sulston J.E."/>
            <person name="Beck S."/>
            <person name="Bentley D.R."/>
            <person name="Rogers J."/>
            <person name="Ross M.T."/>
        </authorList>
    </citation>
    <scope>NUCLEOTIDE SEQUENCE [LARGE SCALE GENOMIC DNA]</scope>
</reference>
<feature type="chain" id="PRO_0000444948" description="Uncharacterized protein C13orf46">
    <location>
        <begin position="1"/>
        <end position="212"/>
    </location>
</feature>
<feature type="region of interest" description="Disordered" evidence="1">
    <location>
        <begin position="1"/>
        <end position="148"/>
    </location>
</feature>
<feature type="region of interest" description="Disordered" evidence="1">
    <location>
        <begin position="168"/>
        <end position="190"/>
    </location>
</feature>
<feature type="compositionally biased region" description="Basic and acidic residues" evidence="1">
    <location>
        <begin position="61"/>
        <end position="70"/>
    </location>
</feature>
<feature type="compositionally biased region" description="Polar residues" evidence="1">
    <location>
        <begin position="71"/>
        <end position="85"/>
    </location>
</feature>
<feature type="compositionally biased region" description="Basic and acidic residues" evidence="1">
    <location>
        <begin position="99"/>
        <end position="115"/>
    </location>
</feature>
<feature type="compositionally biased region" description="Basic and acidic residues" evidence="1">
    <location>
        <begin position="124"/>
        <end position="144"/>
    </location>
</feature>
<feature type="compositionally biased region" description="Basic and acidic residues" evidence="1">
    <location>
        <begin position="168"/>
        <end position="180"/>
    </location>
</feature>
<name>CM046_HUMAN</name>
<organism>
    <name type="scientific">Homo sapiens</name>
    <name type="common">Human</name>
    <dbReference type="NCBI Taxonomy" id="9606"/>
    <lineage>
        <taxon>Eukaryota</taxon>
        <taxon>Metazoa</taxon>
        <taxon>Chordata</taxon>
        <taxon>Craniata</taxon>
        <taxon>Vertebrata</taxon>
        <taxon>Euteleostomi</taxon>
        <taxon>Mammalia</taxon>
        <taxon>Eutheria</taxon>
        <taxon>Euarchontoglires</taxon>
        <taxon>Primates</taxon>
        <taxon>Haplorrhini</taxon>
        <taxon>Catarrhini</taxon>
        <taxon>Hominidae</taxon>
        <taxon>Homo</taxon>
    </lineage>
</organism>
<accession>A0A1B0GUA9</accession>
<sequence>MEKDTGTTHRRHRPGLRALPSGVALGHLKAASEASELQRSRSLGGLQPEGDPPSRPRKPHKELESEDQGKDPSSNAEDASCQKNLAQDKKESFSTLGKLGHESGKQDPEREKSDLEASMQEVQEGEHADGGLQEAKEQEAESIKLNDLQEEEKASVFVEIDLGDHAEEVVTDAKKEEKPSQMDVEDLSEDEMQTSWVCCIPYSTRKRAKEST</sequence>
<gene>
    <name evidence="3" type="primary">C13orf46</name>
</gene>